<accession>C5D663</accession>
<protein>
    <recommendedName>
        <fullName evidence="1">ATP-dependent 6-phosphofructokinase</fullName>
        <shortName evidence="1">ATP-PFK</shortName>
        <shortName evidence="1">Phosphofructokinase</shortName>
        <ecNumber evidence="1">2.7.1.11</ecNumber>
    </recommendedName>
    <alternativeName>
        <fullName evidence="1">Phosphohexokinase</fullName>
    </alternativeName>
</protein>
<name>PFKA_GEOSW</name>
<keyword id="KW-0021">Allosteric enzyme</keyword>
<keyword id="KW-0067">ATP-binding</keyword>
<keyword id="KW-0963">Cytoplasm</keyword>
<keyword id="KW-0324">Glycolysis</keyword>
<keyword id="KW-0418">Kinase</keyword>
<keyword id="KW-0460">Magnesium</keyword>
<keyword id="KW-0479">Metal-binding</keyword>
<keyword id="KW-0547">Nucleotide-binding</keyword>
<keyword id="KW-0808">Transferase</keyword>
<comment type="function">
    <text evidence="1">Catalyzes the phosphorylation of D-fructose 6-phosphate to fructose 1,6-bisphosphate by ATP, the first committing step of glycolysis.</text>
</comment>
<comment type="catalytic activity">
    <reaction evidence="1">
        <text>beta-D-fructose 6-phosphate + ATP = beta-D-fructose 1,6-bisphosphate + ADP + H(+)</text>
        <dbReference type="Rhea" id="RHEA:16109"/>
        <dbReference type="ChEBI" id="CHEBI:15378"/>
        <dbReference type="ChEBI" id="CHEBI:30616"/>
        <dbReference type="ChEBI" id="CHEBI:32966"/>
        <dbReference type="ChEBI" id="CHEBI:57634"/>
        <dbReference type="ChEBI" id="CHEBI:456216"/>
        <dbReference type="EC" id="2.7.1.11"/>
    </reaction>
</comment>
<comment type="cofactor">
    <cofactor evidence="1">
        <name>Mg(2+)</name>
        <dbReference type="ChEBI" id="CHEBI:18420"/>
    </cofactor>
</comment>
<comment type="activity regulation">
    <text evidence="1">Allosterically activated by ADP and other diphosphonucleosides, and allosterically inhibited by phosphoenolpyruvate.</text>
</comment>
<comment type="pathway">
    <text evidence="1">Carbohydrate degradation; glycolysis; D-glyceraldehyde 3-phosphate and glycerone phosphate from D-glucose: step 3/4.</text>
</comment>
<comment type="subunit">
    <text evidence="1">Homotetramer.</text>
</comment>
<comment type="subcellular location">
    <subcellularLocation>
        <location evidence="1">Cytoplasm</location>
    </subcellularLocation>
</comment>
<comment type="similarity">
    <text evidence="1">Belongs to the phosphofructokinase type A (PFKA) family. ATP-dependent PFK group I subfamily. Prokaryotic clade 'B1' sub-subfamily.</text>
</comment>
<proteinExistence type="inferred from homology"/>
<evidence type="ECO:0000255" key="1">
    <source>
        <dbReference type="HAMAP-Rule" id="MF_00339"/>
    </source>
</evidence>
<feature type="chain" id="PRO_1000205247" description="ATP-dependent 6-phosphofructokinase">
    <location>
        <begin position="1"/>
        <end position="319"/>
    </location>
</feature>
<feature type="active site" description="Proton acceptor" evidence="1">
    <location>
        <position position="127"/>
    </location>
</feature>
<feature type="binding site" evidence="1">
    <location>
        <position position="11"/>
    </location>
    <ligand>
        <name>ATP</name>
        <dbReference type="ChEBI" id="CHEBI:30616"/>
    </ligand>
</feature>
<feature type="binding site" evidence="1">
    <location>
        <begin position="21"/>
        <end position="25"/>
    </location>
    <ligand>
        <name>ADP</name>
        <dbReference type="ChEBI" id="CHEBI:456216"/>
        <note>allosteric activator; ligand shared between dimeric partners</note>
    </ligand>
</feature>
<feature type="binding site" evidence="1">
    <location>
        <begin position="72"/>
        <end position="73"/>
    </location>
    <ligand>
        <name>ATP</name>
        <dbReference type="ChEBI" id="CHEBI:30616"/>
    </ligand>
</feature>
<feature type="binding site" evidence="1">
    <location>
        <begin position="102"/>
        <end position="105"/>
    </location>
    <ligand>
        <name>ATP</name>
        <dbReference type="ChEBI" id="CHEBI:30616"/>
    </ligand>
</feature>
<feature type="binding site" evidence="1">
    <location>
        <position position="103"/>
    </location>
    <ligand>
        <name>Mg(2+)</name>
        <dbReference type="ChEBI" id="CHEBI:18420"/>
        <note>catalytic</note>
    </ligand>
</feature>
<feature type="binding site" description="in other chain" evidence="1">
    <location>
        <begin position="125"/>
        <end position="127"/>
    </location>
    <ligand>
        <name>substrate</name>
        <note>ligand shared between dimeric partners</note>
    </ligand>
</feature>
<feature type="binding site" description="in other chain" evidence="1">
    <location>
        <position position="154"/>
    </location>
    <ligand>
        <name>ADP</name>
        <dbReference type="ChEBI" id="CHEBI:456216"/>
        <note>allosteric activator; ligand shared between dimeric partners</note>
    </ligand>
</feature>
<feature type="binding site" evidence="1">
    <location>
        <position position="162"/>
    </location>
    <ligand>
        <name>substrate</name>
        <note>ligand shared between dimeric partners</note>
    </ligand>
</feature>
<feature type="binding site" description="in other chain" evidence="1">
    <location>
        <begin position="169"/>
        <end position="171"/>
    </location>
    <ligand>
        <name>substrate</name>
        <note>ligand shared between dimeric partners</note>
    </ligand>
</feature>
<feature type="binding site" description="in other chain" evidence="1">
    <location>
        <begin position="185"/>
        <end position="187"/>
    </location>
    <ligand>
        <name>ADP</name>
        <dbReference type="ChEBI" id="CHEBI:456216"/>
        <note>allosteric activator; ligand shared between dimeric partners</note>
    </ligand>
</feature>
<feature type="binding site" description="in other chain" evidence="1">
    <location>
        <position position="211"/>
    </location>
    <ligand>
        <name>ADP</name>
        <dbReference type="ChEBI" id="CHEBI:456216"/>
        <note>allosteric activator; ligand shared between dimeric partners</note>
    </ligand>
</feature>
<feature type="binding site" description="in other chain" evidence="1">
    <location>
        <begin position="213"/>
        <end position="215"/>
    </location>
    <ligand>
        <name>ADP</name>
        <dbReference type="ChEBI" id="CHEBI:456216"/>
        <note>allosteric activator; ligand shared between dimeric partners</note>
    </ligand>
</feature>
<feature type="binding site" description="in other chain" evidence="1">
    <location>
        <position position="222"/>
    </location>
    <ligand>
        <name>substrate</name>
        <note>ligand shared between dimeric partners</note>
    </ligand>
</feature>
<feature type="binding site" evidence="1">
    <location>
        <position position="243"/>
    </location>
    <ligand>
        <name>substrate</name>
        <note>ligand shared between dimeric partners</note>
    </ligand>
</feature>
<feature type="binding site" description="in other chain" evidence="1">
    <location>
        <begin position="249"/>
        <end position="252"/>
    </location>
    <ligand>
        <name>substrate</name>
        <note>ligand shared between dimeric partners</note>
    </ligand>
</feature>
<dbReference type="EC" id="2.7.1.11" evidence="1"/>
<dbReference type="EMBL" id="CP001638">
    <property type="protein sequence ID" value="ACS25379.1"/>
    <property type="molecule type" value="Genomic_DNA"/>
</dbReference>
<dbReference type="SMR" id="C5D663"/>
<dbReference type="STRING" id="471223.GWCH70_2686"/>
<dbReference type="KEGG" id="gwc:GWCH70_2686"/>
<dbReference type="eggNOG" id="COG0205">
    <property type="taxonomic scope" value="Bacteria"/>
</dbReference>
<dbReference type="HOGENOM" id="CLU_020655_0_1_9"/>
<dbReference type="OrthoDB" id="9802503at2"/>
<dbReference type="UniPathway" id="UPA00109">
    <property type="reaction ID" value="UER00182"/>
</dbReference>
<dbReference type="GO" id="GO:0005945">
    <property type="term" value="C:6-phosphofructokinase complex"/>
    <property type="evidence" value="ECO:0007669"/>
    <property type="project" value="TreeGrafter"/>
</dbReference>
<dbReference type="GO" id="GO:0003872">
    <property type="term" value="F:6-phosphofructokinase activity"/>
    <property type="evidence" value="ECO:0007669"/>
    <property type="project" value="UniProtKB-UniRule"/>
</dbReference>
<dbReference type="GO" id="GO:0016208">
    <property type="term" value="F:AMP binding"/>
    <property type="evidence" value="ECO:0007669"/>
    <property type="project" value="TreeGrafter"/>
</dbReference>
<dbReference type="GO" id="GO:0005524">
    <property type="term" value="F:ATP binding"/>
    <property type="evidence" value="ECO:0007669"/>
    <property type="project" value="UniProtKB-KW"/>
</dbReference>
<dbReference type="GO" id="GO:0070095">
    <property type="term" value="F:fructose-6-phosphate binding"/>
    <property type="evidence" value="ECO:0007669"/>
    <property type="project" value="TreeGrafter"/>
</dbReference>
<dbReference type="GO" id="GO:0042802">
    <property type="term" value="F:identical protein binding"/>
    <property type="evidence" value="ECO:0007669"/>
    <property type="project" value="TreeGrafter"/>
</dbReference>
<dbReference type="GO" id="GO:0046872">
    <property type="term" value="F:metal ion binding"/>
    <property type="evidence" value="ECO:0007669"/>
    <property type="project" value="UniProtKB-KW"/>
</dbReference>
<dbReference type="GO" id="GO:0048029">
    <property type="term" value="F:monosaccharide binding"/>
    <property type="evidence" value="ECO:0007669"/>
    <property type="project" value="TreeGrafter"/>
</dbReference>
<dbReference type="GO" id="GO:0061621">
    <property type="term" value="P:canonical glycolysis"/>
    <property type="evidence" value="ECO:0007669"/>
    <property type="project" value="TreeGrafter"/>
</dbReference>
<dbReference type="GO" id="GO:0030388">
    <property type="term" value="P:fructose 1,6-bisphosphate metabolic process"/>
    <property type="evidence" value="ECO:0007669"/>
    <property type="project" value="TreeGrafter"/>
</dbReference>
<dbReference type="GO" id="GO:0006002">
    <property type="term" value="P:fructose 6-phosphate metabolic process"/>
    <property type="evidence" value="ECO:0007669"/>
    <property type="project" value="InterPro"/>
</dbReference>
<dbReference type="CDD" id="cd00763">
    <property type="entry name" value="Bacterial_PFK"/>
    <property type="match status" value="1"/>
</dbReference>
<dbReference type="FunFam" id="3.40.50.450:FF:000001">
    <property type="entry name" value="ATP-dependent 6-phosphofructokinase"/>
    <property type="match status" value="1"/>
</dbReference>
<dbReference type="FunFam" id="3.40.50.460:FF:000002">
    <property type="entry name" value="ATP-dependent 6-phosphofructokinase"/>
    <property type="match status" value="1"/>
</dbReference>
<dbReference type="Gene3D" id="3.40.50.450">
    <property type="match status" value="1"/>
</dbReference>
<dbReference type="Gene3D" id="3.40.50.460">
    <property type="entry name" value="Phosphofructokinase domain"/>
    <property type="match status" value="1"/>
</dbReference>
<dbReference type="HAMAP" id="MF_00339">
    <property type="entry name" value="Phosphofructokinase_I_B1"/>
    <property type="match status" value="1"/>
</dbReference>
<dbReference type="InterPro" id="IPR022953">
    <property type="entry name" value="ATP_PFK"/>
</dbReference>
<dbReference type="InterPro" id="IPR012003">
    <property type="entry name" value="ATP_PFK_prok-type"/>
</dbReference>
<dbReference type="InterPro" id="IPR012828">
    <property type="entry name" value="PFKA_ATP_prok"/>
</dbReference>
<dbReference type="InterPro" id="IPR015912">
    <property type="entry name" value="Phosphofructokinase_CS"/>
</dbReference>
<dbReference type="InterPro" id="IPR000023">
    <property type="entry name" value="Phosphofructokinase_dom"/>
</dbReference>
<dbReference type="InterPro" id="IPR035966">
    <property type="entry name" value="PKF_sf"/>
</dbReference>
<dbReference type="NCBIfam" id="TIGR02482">
    <property type="entry name" value="PFKA_ATP"/>
    <property type="match status" value="1"/>
</dbReference>
<dbReference type="NCBIfam" id="NF002872">
    <property type="entry name" value="PRK03202.1"/>
    <property type="match status" value="1"/>
</dbReference>
<dbReference type="PANTHER" id="PTHR13697:SF4">
    <property type="entry name" value="ATP-DEPENDENT 6-PHOSPHOFRUCTOKINASE"/>
    <property type="match status" value="1"/>
</dbReference>
<dbReference type="PANTHER" id="PTHR13697">
    <property type="entry name" value="PHOSPHOFRUCTOKINASE"/>
    <property type="match status" value="1"/>
</dbReference>
<dbReference type="Pfam" id="PF00365">
    <property type="entry name" value="PFK"/>
    <property type="match status" value="1"/>
</dbReference>
<dbReference type="PIRSF" id="PIRSF000532">
    <property type="entry name" value="ATP_PFK_prok"/>
    <property type="match status" value="1"/>
</dbReference>
<dbReference type="PRINTS" id="PR00476">
    <property type="entry name" value="PHFRCTKINASE"/>
</dbReference>
<dbReference type="SUPFAM" id="SSF53784">
    <property type="entry name" value="Phosphofructokinase"/>
    <property type="match status" value="1"/>
</dbReference>
<dbReference type="PROSITE" id="PS00433">
    <property type="entry name" value="PHOSPHOFRUCTOKINASE"/>
    <property type="match status" value="1"/>
</dbReference>
<reference key="1">
    <citation type="submission" date="2009-06" db="EMBL/GenBank/DDBJ databases">
        <title>Complete sequence of chromosome of Geopacillus sp. WCH70.</title>
        <authorList>
            <consortium name="US DOE Joint Genome Institute"/>
            <person name="Lucas S."/>
            <person name="Copeland A."/>
            <person name="Lapidus A."/>
            <person name="Glavina del Rio T."/>
            <person name="Dalin E."/>
            <person name="Tice H."/>
            <person name="Bruce D."/>
            <person name="Goodwin L."/>
            <person name="Pitluck S."/>
            <person name="Chertkov O."/>
            <person name="Brettin T."/>
            <person name="Detter J.C."/>
            <person name="Han C."/>
            <person name="Larimer F."/>
            <person name="Land M."/>
            <person name="Hauser L."/>
            <person name="Kyrpides N."/>
            <person name="Mikhailova N."/>
            <person name="Brumm P."/>
            <person name="Mead D.A."/>
            <person name="Richardson P."/>
        </authorList>
    </citation>
    <scope>NUCLEOTIDE SEQUENCE [LARGE SCALE GENOMIC DNA]</scope>
    <source>
        <strain>WCH70</strain>
    </source>
</reference>
<sequence length="319" mass="34140">MKRIGVLTSGGDSPGMNAAIRAVVRKAIYHGVEVFGIYYGYAGLIAGKIKKLEVGDVGDIIHRGGTILYTARCPEFKTEEGQLKGIEQLKKHGIEGLVVIGGDGSYQGAKKLTEHGFPCVGVPGTIDNDIPGTDFTIGFDTALNTVIDAIDKIRDTATSHERTYVIEVMGRHAGDIALWSGLAGGAETILIPEADYDMNDVIARLKRGHERGKKHSIIIVAEGVGSGVEFGKKIQEATGFETRVTVLGHVQRGGSPTAFDRVLASRLGARAVELLLEGKGGRCVGIQNNQLVDHDIVEALANKHTVDQKMYLLSKELSI</sequence>
<gene>
    <name evidence="1" type="primary">pfkA</name>
    <name type="ordered locus">GWCH70_2686</name>
</gene>
<organism>
    <name type="scientific">Geobacillus sp. (strain WCH70)</name>
    <dbReference type="NCBI Taxonomy" id="471223"/>
    <lineage>
        <taxon>Bacteria</taxon>
        <taxon>Bacillati</taxon>
        <taxon>Bacillota</taxon>
        <taxon>Bacilli</taxon>
        <taxon>Bacillales</taxon>
        <taxon>Anoxybacillaceae</taxon>
        <taxon>Geobacillus</taxon>
    </lineage>
</organism>